<organism>
    <name type="scientific">Solanum lycopersicum</name>
    <name type="common">Tomato</name>
    <name type="synonym">Lycopersicon esculentum</name>
    <dbReference type="NCBI Taxonomy" id="4081"/>
    <lineage>
        <taxon>Eukaryota</taxon>
        <taxon>Viridiplantae</taxon>
        <taxon>Streptophyta</taxon>
        <taxon>Embryophyta</taxon>
        <taxon>Tracheophyta</taxon>
        <taxon>Spermatophyta</taxon>
        <taxon>Magnoliopsida</taxon>
        <taxon>eudicotyledons</taxon>
        <taxon>Gunneridae</taxon>
        <taxon>Pentapetalae</taxon>
        <taxon>asterids</taxon>
        <taxon>lamiids</taxon>
        <taxon>Solanales</taxon>
        <taxon>Solanaceae</taxon>
        <taxon>Solanoideae</taxon>
        <taxon>Solaneae</taxon>
        <taxon>Solanum</taxon>
        <taxon>Solanum subgen. Lycopersicon</taxon>
    </lineage>
</organism>
<reference key="1">
    <citation type="journal article" date="2006" name="Theor. Appl. Genet.">
        <title>Complete chloroplast genome sequences of Solanum bulbocastanum, Solanum lycopersicum and comparative analyses with other Solanaceae genomes.</title>
        <authorList>
            <person name="Daniell H."/>
            <person name="Lee S.-B."/>
            <person name="Grevich J."/>
            <person name="Saski C."/>
            <person name="Quesada-Vargas T."/>
            <person name="Guda C."/>
            <person name="Tomkins J."/>
            <person name="Jansen R.K."/>
        </authorList>
    </citation>
    <scope>NUCLEOTIDE SEQUENCE [LARGE SCALE GENOMIC DNA]</scope>
    <source>
        <strain>cv. LA3023</strain>
    </source>
</reference>
<reference key="2">
    <citation type="journal article" date="2006" name="J. Mol. Evol.">
        <title>Sequence of the tomato chloroplast DNA and evolutionary comparison of solanaceous plastid genomes.</title>
        <authorList>
            <person name="Kahlau S."/>
            <person name="Aspinall S."/>
            <person name="Gray J.C."/>
            <person name="Bock R."/>
        </authorList>
    </citation>
    <scope>NUCLEOTIDE SEQUENCE [LARGE SCALE GENOMIC DNA]</scope>
    <source>
        <strain>cv. IPA-6</strain>
    </source>
</reference>
<name>RR15_SOLLC</name>
<feature type="chain" id="PRO_0000255557" description="Small ribosomal subunit protein uS15c">
    <location>
        <begin position="1"/>
        <end position="87"/>
    </location>
</feature>
<sequence length="87" mass="10429">MVKNSVISVISQEEKKGSVEFQVFNFTNKIRRLTSHLELHKKDYLSQRGLKKILGKRQRLLAYLAKKNRVRYKELINRLDIRETKTR</sequence>
<comment type="subunit">
    <text evidence="1">Part of the 30S ribosomal subunit.</text>
</comment>
<comment type="subcellular location">
    <subcellularLocation>
        <location>Plastid</location>
        <location>Chloroplast</location>
    </subcellularLocation>
</comment>
<comment type="similarity">
    <text evidence="2">Belongs to the universal ribosomal protein uS15 family.</text>
</comment>
<evidence type="ECO:0000250" key="1"/>
<evidence type="ECO:0000305" key="2"/>
<proteinExistence type="inferred from homology"/>
<accession>Q2MI43</accession>
<geneLocation type="chloroplast"/>
<dbReference type="EMBL" id="DQ347959">
    <property type="protein sequence ID" value="ABC56358.1"/>
    <property type="molecule type" value="Genomic_DNA"/>
</dbReference>
<dbReference type="EMBL" id="AM087200">
    <property type="protein sequence ID" value="CAJ32452.1"/>
    <property type="molecule type" value="Genomic_DNA"/>
</dbReference>
<dbReference type="RefSeq" id="AP_004986.1">
    <property type="nucleotide sequence ID" value="AC_000188.1"/>
</dbReference>
<dbReference type="RefSeq" id="YP_008563146.1">
    <property type="nucleotide sequence ID" value="NC_007898.3"/>
</dbReference>
<dbReference type="SMR" id="Q2MI43"/>
<dbReference type="FunCoup" id="Q2MI43">
    <property type="interactions" value="173"/>
</dbReference>
<dbReference type="STRING" id="4081.Q2MI43"/>
<dbReference type="GeneID" id="3950461"/>
<dbReference type="KEGG" id="sly:3950461"/>
<dbReference type="InParanoid" id="Q2MI43"/>
<dbReference type="OrthoDB" id="441444at2759"/>
<dbReference type="Proteomes" id="UP000004994">
    <property type="component" value="Chloroplast"/>
</dbReference>
<dbReference type="GO" id="GO:0009507">
    <property type="term" value="C:chloroplast"/>
    <property type="evidence" value="ECO:0007669"/>
    <property type="project" value="UniProtKB-SubCell"/>
</dbReference>
<dbReference type="GO" id="GO:1990904">
    <property type="term" value="C:ribonucleoprotein complex"/>
    <property type="evidence" value="ECO:0007669"/>
    <property type="project" value="UniProtKB-KW"/>
</dbReference>
<dbReference type="GO" id="GO:0005840">
    <property type="term" value="C:ribosome"/>
    <property type="evidence" value="ECO:0007669"/>
    <property type="project" value="UniProtKB-KW"/>
</dbReference>
<dbReference type="GO" id="GO:0003735">
    <property type="term" value="F:structural constituent of ribosome"/>
    <property type="evidence" value="ECO:0007669"/>
    <property type="project" value="InterPro"/>
</dbReference>
<dbReference type="GO" id="GO:0006412">
    <property type="term" value="P:translation"/>
    <property type="evidence" value="ECO:0007669"/>
    <property type="project" value="UniProtKB-UniRule"/>
</dbReference>
<dbReference type="CDD" id="cd00353">
    <property type="entry name" value="Ribosomal_S15p_S13e"/>
    <property type="match status" value="1"/>
</dbReference>
<dbReference type="Gene3D" id="1.10.287.10">
    <property type="entry name" value="S15/NS1, RNA-binding"/>
    <property type="match status" value="1"/>
</dbReference>
<dbReference type="HAMAP" id="MF_01343_B">
    <property type="entry name" value="Ribosomal_uS15_B"/>
    <property type="match status" value="1"/>
</dbReference>
<dbReference type="InterPro" id="IPR000589">
    <property type="entry name" value="Ribosomal_uS15"/>
</dbReference>
<dbReference type="InterPro" id="IPR005290">
    <property type="entry name" value="Ribosomal_uS15_bac-type"/>
</dbReference>
<dbReference type="InterPro" id="IPR009068">
    <property type="entry name" value="uS15_NS1_RNA-bd_sf"/>
</dbReference>
<dbReference type="NCBIfam" id="TIGR00952">
    <property type="entry name" value="S15_bact"/>
    <property type="match status" value="1"/>
</dbReference>
<dbReference type="PANTHER" id="PTHR23321">
    <property type="entry name" value="RIBOSOMAL PROTEIN S15, BACTERIAL AND ORGANELLAR"/>
    <property type="match status" value="1"/>
</dbReference>
<dbReference type="PANTHER" id="PTHR23321:SF26">
    <property type="entry name" value="SMALL RIBOSOMAL SUBUNIT PROTEIN US15M"/>
    <property type="match status" value="1"/>
</dbReference>
<dbReference type="Pfam" id="PF00312">
    <property type="entry name" value="Ribosomal_S15"/>
    <property type="match status" value="1"/>
</dbReference>
<dbReference type="SMART" id="SM01387">
    <property type="entry name" value="Ribosomal_S15"/>
    <property type="match status" value="1"/>
</dbReference>
<dbReference type="SUPFAM" id="SSF47060">
    <property type="entry name" value="S15/NS1 RNA-binding domain"/>
    <property type="match status" value="1"/>
</dbReference>
<dbReference type="PROSITE" id="PS00362">
    <property type="entry name" value="RIBOSOMAL_S15"/>
    <property type="match status" value="1"/>
</dbReference>
<gene>
    <name type="primary">rps15</name>
</gene>
<protein>
    <recommendedName>
        <fullName evidence="2">Small ribosomal subunit protein uS15c</fullName>
    </recommendedName>
    <alternativeName>
        <fullName>30S ribosomal protein S15, chloroplastic</fullName>
    </alternativeName>
</protein>
<keyword id="KW-0150">Chloroplast</keyword>
<keyword id="KW-0934">Plastid</keyword>
<keyword id="KW-1185">Reference proteome</keyword>
<keyword id="KW-0687">Ribonucleoprotein</keyword>
<keyword id="KW-0689">Ribosomal protein</keyword>